<reference key="1">
    <citation type="journal article" date="2005" name="Science">
        <title>The transcriptional landscape of the mammalian genome.</title>
        <authorList>
            <person name="Carninci P."/>
            <person name="Kasukawa T."/>
            <person name="Katayama S."/>
            <person name="Gough J."/>
            <person name="Frith M.C."/>
            <person name="Maeda N."/>
            <person name="Oyama R."/>
            <person name="Ravasi T."/>
            <person name="Lenhard B."/>
            <person name="Wells C."/>
            <person name="Kodzius R."/>
            <person name="Shimokawa K."/>
            <person name="Bajic V.B."/>
            <person name="Brenner S.E."/>
            <person name="Batalov S."/>
            <person name="Forrest A.R."/>
            <person name="Zavolan M."/>
            <person name="Davis M.J."/>
            <person name="Wilming L.G."/>
            <person name="Aidinis V."/>
            <person name="Allen J.E."/>
            <person name="Ambesi-Impiombato A."/>
            <person name="Apweiler R."/>
            <person name="Aturaliya R.N."/>
            <person name="Bailey T.L."/>
            <person name="Bansal M."/>
            <person name="Baxter L."/>
            <person name="Beisel K.W."/>
            <person name="Bersano T."/>
            <person name="Bono H."/>
            <person name="Chalk A.M."/>
            <person name="Chiu K.P."/>
            <person name="Choudhary V."/>
            <person name="Christoffels A."/>
            <person name="Clutterbuck D.R."/>
            <person name="Crowe M.L."/>
            <person name="Dalla E."/>
            <person name="Dalrymple B.P."/>
            <person name="de Bono B."/>
            <person name="Della Gatta G."/>
            <person name="di Bernardo D."/>
            <person name="Down T."/>
            <person name="Engstrom P."/>
            <person name="Fagiolini M."/>
            <person name="Faulkner G."/>
            <person name="Fletcher C.F."/>
            <person name="Fukushima T."/>
            <person name="Furuno M."/>
            <person name="Futaki S."/>
            <person name="Gariboldi M."/>
            <person name="Georgii-Hemming P."/>
            <person name="Gingeras T.R."/>
            <person name="Gojobori T."/>
            <person name="Green R.E."/>
            <person name="Gustincich S."/>
            <person name="Harbers M."/>
            <person name="Hayashi Y."/>
            <person name="Hensch T.K."/>
            <person name="Hirokawa N."/>
            <person name="Hill D."/>
            <person name="Huminiecki L."/>
            <person name="Iacono M."/>
            <person name="Ikeo K."/>
            <person name="Iwama A."/>
            <person name="Ishikawa T."/>
            <person name="Jakt M."/>
            <person name="Kanapin A."/>
            <person name="Katoh M."/>
            <person name="Kawasawa Y."/>
            <person name="Kelso J."/>
            <person name="Kitamura H."/>
            <person name="Kitano H."/>
            <person name="Kollias G."/>
            <person name="Krishnan S.P."/>
            <person name="Kruger A."/>
            <person name="Kummerfeld S.K."/>
            <person name="Kurochkin I.V."/>
            <person name="Lareau L.F."/>
            <person name="Lazarevic D."/>
            <person name="Lipovich L."/>
            <person name="Liu J."/>
            <person name="Liuni S."/>
            <person name="McWilliam S."/>
            <person name="Madan Babu M."/>
            <person name="Madera M."/>
            <person name="Marchionni L."/>
            <person name="Matsuda H."/>
            <person name="Matsuzawa S."/>
            <person name="Miki H."/>
            <person name="Mignone F."/>
            <person name="Miyake S."/>
            <person name="Morris K."/>
            <person name="Mottagui-Tabar S."/>
            <person name="Mulder N."/>
            <person name="Nakano N."/>
            <person name="Nakauchi H."/>
            <person name="Ng P."/>
            <person name="Nilsson R."/>
            <person name="Nishiguchi S."/>
            <person name="Nishikawa S."/>
            <person name="Nori F."/>
            <person name="Ohara O."/>
            <person name="Okazaki Y."/>
            <person name="Orlando V."/>
            <person name="Pang K.C."/>
            <person name="Pavan W.J."/>
            <person name="Pavesi G."/>
            <person name="Pesole G."/>
            <person name="Petrovsky N."/>
            <person name="Piazza S."/>
            <person name="Reed J."/>
            <person name="Reid J.F."/>
            <person name="Ring B.Z."/>
            <person name="Ringwald M."/>
            <person name="Rost B."/>
            <person name="Ruan Y."/>
            <person name="Salzberg S.L."/>
            <person name="Sandelin A."/>
            <person name="Schneider C."/>
            <person name="Schoenbach C."/>
            <person name="Sekiguchi K."/>
            <person name="Semple C.A."/>
            <person name="Seno S."/>
            <person name="Sessa L."/>
            <person name="Sheng Y."/>
            <person name="Shibata Y."/>
            <person name="Shimada H."/>
            <person name="Shimada K."/>
            <person name="Silva D."/>
            <person name="Sinclair B."/>
            <person name="Sperling S."/>
            <person name="Stupka E."/>
            <person name="Sugiura K."/>
            <person name="Sultana R."/>
            <person name="Takenaka Y."/>
            <person name="Taki K."/>
            <person name="Tammoja K."/>
            <person name="Tan S.L."/>
            <person name="Tang S."/>
            <person name="Taylor M.S."/>
            <person name="Tegner J."/>
            <person name="Teichmann S.A."/>
            <person name="Ueda H.R."/>
            <person name="van Nimwegen E."/>
            <person name="Verardo R."/>
            <person name="Wei C.L."/>
            <person name="Yagi K."/>
            <person name="Yamanishi H."/>
            <person name="Zabarovsky E."/>
            <person name="Zhu S."/>
            <person name="Zimmer A."/>
            <person name="Hide W."/>
            <person name="Bult C."/>
            <person name="Grimmond S.M."/>
            <person name="Teasdale R.D."/>
            <person name="Liu E.T."/>
            <person name="Brusic V."/>
            <person name="Quackenbush J."/>
            <person name="Wahlestedt C."/>
            <person name="Mattick J.S."/>
            <person name="Hume D.A."/>
            <person name="Kai C."/>
            <person name="Sasaki D."/>
            <person name="Tomaru Y."/>
            <person name="Fukuda S."/>
            <person name="Kanamori-Katayama M."/>
            <person name="Suzuki M."/>
            <person name="Aoki J."/>
            <person name="Arakawa T."/>
            <person name="Iida J."/>
            <person name="Imamura K."/>
            <person name="Itoh M."/>
            <person name="Kato T."/>
            <person name="Kawaji H."/>
            <person name="Kawagashira N."/>
            <person name="Kawashima T."/>
            <person name="Kojima M."/>
            <person name="Kondo S."/>
            <person name="Konno H."/>
            <person name="Nakano K."/>
            <person name="Ninomiya N."/>
            <person name="Nishio T."/>
            <person name="Okada M."/>
            <person name="Plessy C."/>
            <person name="Shibata K."/>
            <person name="Shiraki T."/>
            <person name="Suzuki S."/>
            <person name="Tagami M."/>
            <person name="Waki K."/>
            <person name="Watahiki A."/>
            <person name="Okamura-Oho Y."/>
            <person name="Suzuki H."/>
            <person name="Kawai J."/>
            <person name="Hayashizaki Y."/>
        </authorList>
    </citation>
    <scope>NUCLEOTIDE SEQUENCE [LARGE SCALE MRNA] (ISOFORM 2)</scope>
    <source>
        <strain>C57BL/6J</strain>
        <tissue>Tongue</tissue>
    </source>
</reference>
<reference key="2">
    <citation type="journal article" date="2004" name="Genome Res.">
        <title>The status, quality, and expansion of the NIH full-length cDNA project: the Mammalian Gene Collection (MGC).</title>
        <authorList>
            <consortium name="The MGC Project Team"/>
        </authorList>
    </citation>
    <scope>NUCLEOTIDE SEQUENCE [LARGE SCALE MRNA] (ISOFORM 1)</scope>
</reference>
<organism>
    <name type="scientific">Mus musculus</name>
    <name type="common">Mouse</name>
    <dbReference type="NCBI Taxonomy" id="10090"/>
    <lineage>
        <taxon>Eukaryota</taxon>
        <taxon>Metazoa</taxon>
        <taxon>Chordata</taxon>
        <taxon>Craniata</taxon>
        <taxon>Vertebrata</taxon>
        <taxon>Euteleostomi</taxon>
        <taxon>Mammalia</taxon>
        <taxon>Eutheria</taxon>
        <taxon>Euarchontoglires</taxon>
        <taxon>Glires</taxon>
        <taxon>Rodentia</taxon>
        <taxon>Myomorpha</taxon>
        <taxon>Muroidea</taxon>
        <taxon>Muridae</taxon>
        <taxon>Murinae</taxon>
        <taxon>Mus</taxon>
        <taxon>Mus</taxon>
    </lineage>
</organism>
<sequence>MQQEAAQRESEELQRVQWQPRRVRGWGVPKLLWFLVFLQPVITELHLRRRNVRFLFIRFSAWQYAGTDKLWAGLVTTLCEGIRHHYGALPFSVYSVLGNKPCGPRDGLCQREWHCRRRVCLALLALLAALCLGVGLLYLSLGGHAPGHGERGVLKALGGAATTLSGSGLLMAVYSVGKHLFVSQRKKIERLVSREKFGSQLGFMCEVKKEVELLTDFLCFLEIYQRRRLRVVLEVTGLDTCYPERVVGVLNAINTLLSDSHAPFIFILVVDPSILAACLESAGNMKGTADNGYLFLNRTVTLPFSVPIMGRRTKLQFLHDAVRSRDDLLFRELTIKLQPQSPGNLGAGEGTQLLAVETQGDAERTQGRVDAEAARRIQEALCCLHDEGDCLYEYVPDNVVSMRRIVNTVPITVRLLQQQQQQQPDRVGPTPRHAVAWVVLANQWPCRLSWVLQCLEDRQQAGGAPEGRSRLWDVFCDNSRELHTMTKALQNVLDLDGDPELFERFLGTDFPFTVAEAQSLLRCTVNLDHSIRRRMGLIRAVSALKPPSPPKSPSQDGPQASPRAIIAAGTSHAGQGSGHSKEAHQTRDRTHGGKPRPMA</sequence>
<evidence type="ECO:0000255" key="1"/>
<evidence type="ECO:0000256" key="2">
    <source>
        <dbReference type="SAM" id="MobiDB-lite"/>
    </source>
</evidence>
<evidence type="ECO:0000303" key="3">
    <source>
    </source>
</evidence>
<evidence type="ECO:0000305" key="4"/>
<proteinExistence type="evidence at transcript level"/>
<comment type="subcellular location">
    <subcellularLocation>
        <location evidence="4">Membrane</location>
        <topology evidence="4">Multi-pass membrane protein</topology>
    </subcellularLocation>
</comment>
<comment type="alternative products">
    <event type="alternative splicing"/>
    <isoform>
        <id>Q0VF94-1</id>
        <name>1</name>
        <sequence type="displayed"/>
    </isoform>
    <isoform>
        <id>Q0VF94-2</id>
        <name>2</name>
        <sequence type="described" ref="VSP_026599"/>
    </isoform>
</comment>
<comment type="sequence caution" evidence="4">
    <conflict type="erroneous initiation">
        <sequence resource="EMBL-CDS" id="BAB26238"/>
    </conflict>
</comment>
<keyword id="KW-0025">Alternative splicing</keyword>
<keyword id="KW-0472">Membrane</keyword>
<keyword id="KW-1185">Reference proteome</keyword>
<keyword id="KW-0812">Transmembrane</keyword>
<keyword id="KW-1133">Transmembrane helix</keyword>
<name>NKPD1_MOUSE</name>
<accession>Q0VF94</accession>
<accession>Q9D7C6</accession>
<dbReference type="EMBL" id="AK009357">
    <property type="protein sequence ID" value="BAB26238.1"/>
    <property type="status" value="ALT_INIT"/>
    <property type="molecule type" value="mRNA"/>
</dbReference>
<dbReference type="EMBL" id="BC118925">
    <property type="protein sequence ID" value="AAI18926.1"/>
    <property type="molecule type" value="mRNA"/>
</dbReference>
<dbReference type="RefSeq" id="NP_081392.1">
    <property type="nucleotide sequence ID" value="NM_027116.1"/>
</dbReference>
<dbReference type="STRING" id="10090.ENSMUSP00000147092"/>
<dbReference type="GlyGen" id="Q0VF94">
    <property type="glycosylation" value="1 site"/>
</dbReference>
<dbReference type="PhosphoSitePlus" id="Q0VF94"/>
<dbReference type="PaxDb" id="10090-ENSMUSP00000077943"/>
<dbReference type="ProteomicsDB" id="293568">
    <molecule id="Q0VF94-1"/>
</dbReference>
<dbReference type="ProteomicsDB" id="293569">
    <molecule id="Q0VF94-2"/>
</dbReference>
<dbReference type="GeneID" id="69547"/>
<dbReference type="KEGG" id="mmu:69547"/>
<dbReference type="AGR" id="MGI:1916797"/>
<dbReference type="CTD" id="284353"/>
<dbReference type="MGI" id="MGI:1916797">
    <property type="gene designation" value="Nkpd1"/>
</dbReference>
<dbReference type="eggNOG" id="KOG0502">
    <property type="taxonomic scope" value="Eukaryota"/>
</dbReference>
<dbReference type="InParanoid" id="Q0VF94"/>
<dbReference type="OrthoDB" id="10015264at2759"/>
<dbReference type="PhylomeDB" id="Q0VF94"/>
<dbReference type="BioGRID-ORCS" id="69547">
    <property type="hits" value="1 hit in 80 CRISPR screens"/>
</dbReference>
<dbReference type="PRO" id="PR:Q0VF94"/>
<dbReference type="Proteomes" id="UP000000589">
    <property type="component" value="Unplaced"/>
</dbReference>
<dbReference type="RNAct" id="Q0VF94">
    <property type="molecule type" value="protein"/>
</dbReference>
<dbReference type="GO" id="GO:0016020">
    <property type="term" value="C:membrane"/>
    <property type="evidence" value="ECO:0007669"/>
    <property type="project" value="UniProtKB-SubCell"/>
</dbReference>
<dbReference type="InterPro" id="IPR011646">
    <property type="entry name" value="KAP_P-loop"/>
</dbReference>
<dbReference type="InterPro" id="IPR052754">
    <property type="entry name" value="NTPase_KAP_P-loop"/>
</dbReference>
<dbReference type="PANTHER" id="PTHR22674:SF4">
    <property type="entry name" value="NTPASE KAP FAMILY P-LOOP DOMAIN-CONTAINING PROTEIN 1"/>
    <property type="match status" value="1"/>
</dbReference>
<dbReference type="PANTHER" id="PTHR22674">
    <property type="entry name" value="NTPASE, KAP FAMILY P-LOOP DOMAIN-CONTAINING 1"/>
    <property type="match status" value="1"/>
</dbReference>
<dbReference type="Pfam" id="PF07693">
    <property type="entry name" value="KAP_NTPase"/>
    <property type="match status" value="1"/>
</dbReference>
<gene>
    <name type="primary">Nkpd1</name>
</gene>
<feature type="chain" id="PRO_0000294151" description="NTPase KAP family P-loop domain-containing protein 1">
    <location>
        <begin position="1"/>
        <end position="599"/>
    </location>
</feature>
<feature type="transmembrane region" description="Helical" evidence="1">
    <location>
        <begin position="25"/>
        <end position="45"/>
    </location>
</feature>
<feature type="transmembrane region" description="Helical" evidence="1">
    <location>
        <begin position="119"/>
        <end position="139"/>
    </location>
</feature>
<feature type="transmembrane region" description="Helical" evidence="1">
    <location>
        <begin position="156"/>
        <end position="176"/>
    </location>
</feature>
<feature type="domain" description="KAP NTPase">
    <location>
        <begin position="1"/>
        <end position="416"/>
    </location>
</feature>
<feature type="region of interest" description="Disordered" evidence="2">
    <location>
        <begin position="543"/>
        <end position="599"/>
    </location>
</feature>
<feature type="compositionally biased region" description="Basic and acidic residues" evidence="2">
    <location>
        <begin position="579"/>
        <end position="591"/>
    </location>
</feature>
<feature type="splice variant" id="VSP_026599" description="In isoform 2." evidence="3">
    <location>
        <begin position="1"/>
        <end position="284"/>
    </location>
</feature>
<protein>
    <recommendedName>
        <fullName>NTPase KAP family P-loop domain-containing protein 1</fullName>
    </recommendedName>
</protein>